<name>APT_BACCQ</name>
<sequence>MDFKQHIAIVPDYPKEGIVFKDITPLMNDGKAYKAATDAIVEYAKERDIDLVVGPEARGFIIGCPVSYALEVGFAPVRKLGKLPREVITVDYGKEYGKDVLTIHKDAIKPGQRVLITDDLLATGGTIEATIKLVEELGGVVAGIAFLVELTYLDGRKMLDGYDVLVLEKY</sequence>
<keyword id="KW-0963">Cytoplasm</keyword>
<keyword id="KW-0328">Glycosyltransferase</keyword>
<keyword id="KW-0660">Purine salvage</keyword>
<keyword id="KW-0808">Transferase</keyword>
<evidence type="ECO:0000255" key="1">
    <source>
        <dbReference type="HAMAP-Rule" id="MF_00004"/>
    </source>
</evidence>
<protein>
    <recommendedName>
        <fullName evidence="1">Adenine phosphoribosyltransferase</fullName>
        <shortName evidence="1">APRT</shortName>
        <ecNumber evidence="1">2.4.2.7</ecNumber>
    </recommendedName>
</protein>
<comment type="function">
    <text evidence="1">Catalyzes a salvage reaction resulting in the formation of AMP, that is energically less costly than de novo synthesis.</text>
</comment>
<comment type="catalytic activity">
    <reaction evidence="1">
        <text>AMP + diphosphate = 5-phospho-alpha-D-ribose 1-diphosphate + adenine</text>
        <dbReference type="Rhea" id="RHEA:16609"/>
        <dbReference type="ChEBI" id="CHEBI:16708"/>
        <dbReference type="ChEBI" id="CHEBI:33019"/>
        <dbReference type="ChEBI" id="CHEBI:58017"/>
        <dbReference type="ChEBI" id="CHEBI:456215"/>
        <dbReference type="EC" id="2.4.2.7"/>
    </reaction>
</comment>
<comment type="pathway">
    <text evidence="1">Purine metabolism; AMP biosynthesis via salvage pathway; AMP from adenine: step 1/1.</text>
</comment>
<comment type="subunit">
    <text evidence="1">Homodimer.</text>
</comment>
<comment type="subcellular location">
    <subcellularLocation>
        <location evidence="1">Cytoplasm</location>
    </subcellularLocation>
</comment>
<comment type="similarity">
    <text evidence="1">Belongs to the purine/pyrimidine phosphoribosyltransferase family.</text>
</comment>
<organism>
    <name type="scientific">Bacillus cereus (strain Q1)</name>
    <dbReference type="NCBI Taxonomy" id="361100"/>
    <lineage>
        <taxon>Bacteria</taxon>
        <taxon>Bacillati</taxon>
        <taxon>Bacillota</taxon>
        <taxon>Bacilli</taxon>
        <taxon>Bacillales</taxon>
        <taxon>Bacillaceae</taxon>
        <taxon>Bacillus</taxon>
        <taxon>Bacillus cereus group</taxon>
    </lineage>
</organism>
<gene>
    <name evidence="1" type="primary">apt</name>
    <name type="ordered locus">BCQ_4194</name>
</gene>
<reference key="1">
    <citation type="journal article" date="2009" name="J. Bacteriol.">
        <title>Complete genome sequence of the extremophilic Bacillus cereus strain Q1 with industrial applications.</title>
        <authorList>
            <person name="Xiong Z."/>
            <person name="Jiang Y."/>
            <person name="Qi D."/>
            <person name="Lu H."/>
            <person name="Yang F."/>
            <person name="Yang J."/>
            <person name="Chen L."/>
            <person name="Sun L."/>
            <person name="Xu X."/>
            <person name="Xue Y."/>
            <person name="Zhu Y."/>
            <person name="Jin Q."/>
        </authorList>
    </citation>
    <scope>NUCLEOTIDE SEQUENCE [LARGE SCALE GENOMIC DNA]</scope>
    <source>
        <strain>Q1</strain>
    </source>
</reference>
<accession>B9IYY2</accession>
<feature type="chain" id="PRO_1000116230" description="Adenine phosphoribosyltransferase">
    <location>
        <begin position="1"/>
        <end position="170"/>
    </location>
</feature>
<dbReference type="EC" id="2.4.2.7" evidence="1"/>
<dbReference type="EMBL" id="CP000227">
    <property type="protein sequence ID" value="ACM14621.1"/>
    <property type="molecule type" value="Genomic_DNA"/>
</dbReference>
<dbReference type="SMR" id="B9IYY2"/>
<dbReference type="KEGG" id="bcq:BCQ_4194"/>
<dbReference type="HOGENOM" id="CLU_063339_3_0_9"/>
<dbReference type="UniPathway" id="UPA00588">
    <property type="reaction ID" value="UER00646"/>
</dbReference>
<dbReference type="Proteomes" id="UP000000441">
    <property type="component" value="Chromosome"/>
</dbReference>
<dbReference type="GO" id="GO:0005737">
    <property type="term" value="C:cytoplasm"/>
    <property type="evidence" value="ECO:0007669"/>
    <property type="project" value="UniProtKB-SubCell"/>
</dbReference>
<dbReference type="GO" id="GO:0002055">
    <property type="term" value="F:adenine binding"/>
    <property type="evidence" value="ECO:0007669"/>
    <property type="project" value="TreeGrafter"/>
</dbReference>
<dbReference type="GO" id="GO:0003999">
    <property type="term" value="F:adenine phosphoribosyltransferase activity"/>
    <property type="evidence" value="ECO:0007669"/>
    <property type="project" value="UniProtKB-UniRule"/>
</dbReference>
<dbReference type="GO" id="GO:0016208">
    <property type="term" value="F:AMP binding"/>
    <property type="evidence" value="ECO:0007669"/>
    <property type="project" value="TreeGrafter"/>
</dbReference>
<dbReference type="GO" id="GO:0006168">
    <property type="term" value="P:adenine salvage"/>
    <property type="evidence" value="ECO:0007669"/>
    <property type="project" value="InterPro"/>
</dbReference>
<dbReference type="GO" id="GO:0044209">
    <property type="term" value="P:AMP salvage"/>
    <property type="evidence" value="ECO:0007669"/>
    <property type="project" value="UniProtKB-UniRule"/>
</dbReference>
<dbReference type="GO" id="GO:0006166">
    <property type="term" value="P:purine ribonucleoside salvage"/>
    <property type="evidence" value="ECO:0007669"/>
    <property type="project" value="UniProtKB-KW"/>
</dbReference>
<dbReference type="CDD" id="cd06223">
    <property type="entry name" value="PRTases_typeI"/>
    <property type="match status" value="1"/>
</dbReference>
<dbReference type="FunFam" id="3.40.50.2020:FF:000004">
    <property type="entry name" value="Adenine phosphoribosyltransferase"/>
    <property type="match status" value="1"/>
</dbReference>
<dbReference type="Gene3D" id="3.40.50.2020">
    <property type="match status" value="1"/>
</dbReference>
<dbReference type="HAMAP" id="MF_00004">
    <property type="entry name" value="Aden_phosphoribosyltr"/>
    <property type="match status" value="1"/>
</dbReference>
<dbReference type="InterPro" id="IPR005764">
    <property type="entry name" value="Ade_phspho_trans"/>
</dbReference>
<dbReference type="InterPro" id="IPR000836">
    <property type="entry name" value="PRibTrfase_dom"/>
</dbReference>
<dbReference type="InterPro" id="IPR029057">
    <property type="entry name" value="PRTase-like"/>
</dbReference>
<dbReference type="InterPro" id="IPR050054">
    <property type="entry name" value="UPRTase/APRTase"/>
</dbReference>
<dbReference type="NCBIfam" id="TIGR01090">
    <property type="entry name" value="apt"/>
    <property type="match status" value="1"/>
</dbReference>
<dbReference type="NCBIfam" id="NF002633">
    <property type="entry name" value="PRK02304.1-2"/>
    <property type="match status" value="1"/>
</dbReference>
<dbReference type="NCBIfam" id="NF002634">
    <property type="entry name" value="PRK02304.1-3"/>
    <property type="match status" value="1"/>
</dbReference>
<dbReference type="NCBIfam" id="NF002636">
    <property type="entry name" value="PRK02304.1-5"/>
    <property type="match status" value="1"/>
</dbReference>
<dbReference type="PANTHER" id="PTHR32315">
    <property type="entry name" value="ADENINE PHOSPHORIBOSYLTRANSFERASE"/>
    <property type="match status" value="1"/>
</dbReference>
<dbReference type="PANTHER" id="PTHR32315:SF3">
    <property type="entry name" value="ADENINE PHOSPHORIBOSYLTRANSFERASE"/>
    <property type="match status" value="1"/>
</dbReference>
<dbReference type="Pfam" id="PF00156">
    <property type="entry name" value="Pribosyltran"/>
    <property type="match status" value="1"/>
</dbReference>
<dbReference type="SUPFAM" id="SSF53271">
    <property type="entry name" value="PRTase-like"/>
    <property type="match status" value="1"/>
</dbReference>
<proteinExistence type="inferred from homology"/>